<protein>
    <recommendedName>
        <fullName evidence="1">Orotate phosphoribosyltransferase</fullName>
        <shortName evidence="1">OPRT</shortName>
        <shortName evidence="1">OPRTase</shortName>
        <ecNumber evidence="1">2.4.2.10</ecNumber>
    </recommendedName>
</protein>
<reference key="1">
    <citation type="journal article" date="2007" name="PLoS ONE">
        <title>Analysis of the neurotoxin complex genes in Clostridium botulinum A1-A4 and B1 strains: BoNT/A3, /Ba4 and /B1 clusters are located within plasmids.</title>
        <authorList>
            <person name="Smith T.J."/>
            <person name="Hill K.K."/>
            <person name="Foley B.T."/>
            <person name="Detter J.C."/>
            <person name="Munk A.C."/>
            <person name="Bruce D.C."/>
            <person name="Doggett N.A."/>
            <person name="Smith L.A."/>
            <person name="Marks J.D."/>
            <person name="Xie G."/>
            <person name="Brettin T.S."/>
        </authorList>
    </citation>
    <scope>NUCLEOTIDE SEQUENCE [LARGE SCALE GENOMIC DNA]</scope>
    <source>
        <strain>Loch Maree / Type A3</strain>
    </source>
</reference>
<feature type="chain" id="PRO_1000138781" description="Orotate phosphoribosyltransferase">
    <location>
        <begin position="1"/>
        <end position="191"/>
    </location>
</feature>
<feature type="binding site" evidence="1">
    <location>
        <begin position="114"/>
        <end position="122"/>
    </location>
    <ligand>
        <name>5-phospho-alpha-D-ribose 1-diphosphate</name>
        <dbReference type="ChEBI" id="CHEBI:58017"/>
    </ligand>
</feature>
<feature type="binding site" evidence="1">
    <location>
        <position position="118"/>
    </location>
    <ligand>
        <name>orotate</name>
        <dbReference type="ChEBI" id="CHEBI:30839"/>
    </ligand>
</feature>
<feature type="binding site" evidence="1">
    <location>
        <position position="146"/>
    </location>
    <ligand>
        <name>orotate</name>
        <dbReference type="ChEBI" id="CHEBI:30839"/>
    </ligand>
</feature>
<keyword id="KW-0328">Glycosyltransferase</keyword>
<keyword id="KW-0460">Magnesium</keyword>
<keyword id="KW-0665">Pyrimidine biosynthesis</keyword>
<keyword id="KW-0808">Transferase</keyword>
<dbReference type="EC" id="2.4.2.10" evidence="1"/>
<dbReference type="EMBL" id="CP000962">
    <property type="protein sequence ID" value="ACA55322.1"/>
    <property type="molecule type" value="Genomic_DNA"/>
</dbReference>
<dbReference type="RefSeq" id="WP_012343319.1">
    <property type="nucleotide sequence ID" value="NC_010520.1"/>
</dbReference>
<dbReference type="SMR" id="B1L1E1"/>
<dbReference type="KEGG" id="cbl:CLK_2633"/>
<dbReference type="HOGENOM" id="CLU_074878_3_0_9"/>
<dbReference type="UniPathway" id="UPA00070">
    <property type="reaction ID" value="UER00119"/>
</dbReference>
<dbReference type="GO" id="GO:0000287">
    <property type="term" value="F:magnesium ion binding"/>
    <property type="evidence" value="ECO:0007669"/>
    <property type="project" value="UniProtKB-UniRule"/>
</dbReference>
<dbReference type="GO" id="GO:0004588">
    <property type="term" value="F:orotate phosphoribosyltransferase activity"/>
    <property type="evidence" value="ECO:0007669"/>
    <property type="project" value="UniProtKB-UniRule"/>
</dbReference>
<dbReference type="GO" id="GO:0044205">
    <property type="term" value="P:'de novo' UMP biosynthetic process"/>
    <property type="evidence" value="ECO:0007669"/>
    <property type="project" value="UniProtKB-UniRule"/>
</dbReference>
<dbReference type="GO" id="GO:0019856">
    <property type="term" value="P:pyrimidine nucleobase biosynthetic process"/>
    <property type="evidence" value="ECO:0007669"/>
    <property type="project" value="InterPro"/>
</dbReference>
<dbReference type="CDD" id="cd06223">
    <property type="entry name" value="PRTases_typeI"/>
    <property type="match status" value="1"/>
</dbReference>
<dbReference type="Gene3D" id="3.40.50.2020">
    <property type="match status" value="1"/>
</dbReference>
<dbReference type="HAMAP" id="MF_01208">
    <property type="entry name" value="PyrE"/>
    <property type="match status" value="1"/>
</dbReference>
<dbReference type="InterPro" id="IPR023031">
    <property type="entry name" value="OPRT"/>
</dbReference>
<dbReference type="InterPro" id="IPR006273">
    <property type="entry name" value="Orotate_PRibTrfase_bac"/>
</dbReference>
<dbReference type="InterPro" id="IPR000836">
    <property type="entry name" value="PRibTrfase_dom"/>
</dbReference>
<dbReference type="InterPro" id="IPR029057">
    <property type="entry name" value="PRTase-like"/>
</dbReference>
<dbReference type="NCBIfam" id="TIGR01367">
    <property type="entry name" value="pyrE_Therm"/>
    <property type="match status" value="1"/>
</dbReference>
<dbReference type="PANTHER" id="PTHR19278">
    <property type="entry name" value="OROTATE PHOSPHORIBOSYLTRANSFERASE"/>
    <property type="match status" value="1"/>
</dbReference>
<dbReference type="PANTHER" id="PTHR19278:SF9">
    <property type="entry name" value="URIDINE 5'-MONOPHOSPHATE SYNTHASE"/>
    <property type="match status" value="1"/>
</dbReference>
<dbReference type="Pfam" id="PF00156">
    <property type="entry name" value="Pribosyltran"/>
    <property type="match status" value="1"/>
</dbReference>
<dbReference type="SUPFAM" id="SSF53271">
    <property type="entry name" value="PRTase-like"/>
    <property type="match status" value="1"/>
</dbReference>
<name>PYRE_CLOBM</name>
<organism>
    <name type="scientific">Clostridium botulinum (strain Loch Maree / Type A3)</name>
    <dbReference type="NCBI Taxonomy" id="498214"/>
    <lineage>
        <taxon>Bacteria</taxon>
        <taxon>Bacillati</taxon>
        <taxon>Bacillota</taxon>
        <taxon>Clostridia</taxon>
        <taxon>Eubacteriales</taxon>
        <taxon>Clostridiaceae</taxon>
        <taxon>Clostridium</taxon>
    </lineage>
</organism>
<gene>
    <name evidence="1" type="primary">pyrE</name>
    <name type="ordered locus">CLK_2633</name>
</gene>
<sequence length="191" mass="21226">MSNINVIDILKESDALLEGHFLLSSGRHSNRYCQCAKLLQCPQKAEKVISVIAEKLKEVDFNIIVGPAMGGVIVSYELARQTNKPGIFAERKEGVMCIRRGFEIKKGDKVIISEDVVTTGKSSLEVAKVIEEMGGEVVGIACIVDRRAEDVKTNYPIYSACKLEIETYEKDNCELCKKNIPFVKPGSREQK</sequence>
<comment type="function">
    <text evidence="1">Catalyzes the transfer of a ribosyl phosphate group from 5-phosphoribose 1-diphosphate to orotate, leading to the formation of orotidine monophosphate (OMP).</text>
</comment>
<comment type="catalytic activity">
    <reaction evidence="1">
        <text>orotidine 5'-phosphate + diphosphate = orotate + 5-phospho-alpha-D-ribose 1-diphosphate</text>
        <dbReference type="Rhea" id="RHEA:10380"/>
        <dbReference type="ChEBI" id="CHEBI:30839"/>
        <dbReference type="ChEBI" id="CHEBI:33019"/>
        <dbReference type="ChEBI" id="CHEBI:57538"/>
        <dbReference type="ChEBI" id="CHEBI:58017"/>
        <dbReference type="EC" id="2.4.2.10"/>
    </reaction>
</comment>
<comment type="cofactor">
    <cofactor evidence="1">
        <name>Mg(2+)</name>
        <dbReference type="ChEBI" id="CHEBI:18420"/>
    </cofactor>
</comment>
<comment type="pathway">
    <text evidence="1">Pyrimidine metabolism; UMP biosynthesis via de novo pathway; UMP from orotate: step 1/2.</text>
</comment>
<comment type="subunit">
    <text evidence="1">Homodimer.</text>
</comment>
<comment type="similarity">
    <text evidence="1">Belongs to the purine/pyrimidine phosphoribosyltransferase family. PyrE subfamily.</text>
</comment>
<accession>B1L1E1</accession>
<proteinExistence type="inferred from homology"/>
<evidence type="ECO:0000255" key="1">
    <source>
        <dbReference type="HAMAP-Rule" id="MF_01208"/>
    </source>
</evidence>